<name>COAE_STAAM</name>
<sequence length="207" mass="23623">MPKVIGLTGGIASGKSTVSELLSVFGFKVVDADKAAREAVKKGSKGLAQVREVFGDEAIDENGEMNRRYMGDLVFNHPEKRLELNAIIHPIVRDIMEEEKQEYLKQGYNVIMDIPLLFENELENTVDEVWVVYTSESIQMDRLMQRNNLSLEDAKARVYSQISIDKKSRMADHVIDNLGDKLELKQNLERLLEEEGYIEKPNYGEED</sequence>
<gene>
    <name evidence="1" type="primary">coaE</name>
    <name type="ordered locus">SAV1688</name>
</gene>
<dbReference type="EC" id="2.7.1.24" evidence="1"/>
<dbReference type="EMBL" id="BA000017">
    <property type="protein sequence ID" value="BAB57850.1"/>
    <property type="molecule type" value="Genomic_DNA"/>
</dbReference>
<dbReference type="RefSeq" id="WP_001127167.1">
    <property type="nucleotide sequence ID" value="NC_002758.2"/>
</dbReference>
<dbReference type="SMR" id="P63830"/>
<dbReference type="KEGG" id="sav:SAV1688"/>
<dbReference type="HOGENOM" id="CLU_057180_0_0_9"/>
<dbReference type="PhylomeDB" id="P63830"/>
<dbReference type="UniPathway" id="UPA00241">
    <property type="reaction ID" value="UER00356"/>
</dbReference>
<dbReference type="Proteomes" id="UP000002481">
    <property type="component" value="Chromosome"/>
</dbReference>
<dbReference type="GO" id="GO:0005737">
    <property type="term" value="C:cytoplasm"/>
    <property type="evidence" value="ECO:0007669"/>
    <property type="project" value="UniProtKB-SubCell"/>
</dbReference>
<dbReference type="GO" id="GO:0005524">
    <property type="term" value="F:ATP binding"/>
    <property type="evidence" value="ECO:0007669"/>
    <property type="project" value="UniProtKB-UniRule"/>
</dbReference>
<dbReference type="GO" id="GO:0004140">
    <property type="term" value="F:dephospho-CoA kinase activity"/>
    <property type="evidence" value="ECO:0007669"/>
    <property type="project" value="UniProtKB-UniRule"/>
</dbReference>
<dbReference type="GO" id="GO:0015937">
    <property type="term" value="P:coenzyme A biosynthetic process"/>
    <property type="evidence" value="ECO:0007669"/>
    <property type="project" value="UniProtKB-UniRule"/>
</dbReference>
<dbReference type="CDD" id="cd02022">
    <property type="entry name" value="DPCK"/>
    <property type="match status" value="1"/>
</dbReference>
<dbReference type="FunFam" id="3.40.50.300:FF:000991">
    <property type="entry name" value="Dephospho-CoA kinase"/>
    <property type="match status" value="1"/>
</dbReference>
<dbReference type="Gene3D" id="3.40.50.300">
    <property type="entry name" value="P-loop containing nucleotide triphosphate hydrolases"/>
    <property type="match status" value="1"/>
</dbReference>
<dbReference type="HAMAP" id="MF_00376">
    <property type="entry name" value="Dephospho_CoA_kinase"/>
    <property type="match status" value="1"/>
</dbReference>
<dbReference type="InterPro" id="IPR001977">
    <property type="entry name" value="Depp_CoAkinase"/>
</dbReference>
<dbReference type="InterPro" id="IPR027417">
    <property type="entry name" value="P-loop_NTPase"/>
</dbReference>
<dbReference type="NCBIfam" id="TIGR00152">
    <property type="entry name" value="dephospho-CoA kinase"/>
    <property type="match status" value="1"/>
</dbReference>
<dbReference type="PANTHER" id="PTHR10695:SF46">
    <property type="entry name" value="BIFUNCTIONAL COENZYME A SYNTHASE-RELATED"/>
    <property type="match status" value="1"/>
</dbReference>
<dbReference type="PANTHER" id="PTHR10695">
    <property type="entry name" value="DEPHOSPHO-COA KINASE-RELATED"/>
    <property type="match status" value="1"/>
</dbReference>
<dbReference type="Pfam" id="PF01121">
    <property type="entry name" value="CoaE"/>
    <property type="match status" value="1"/>
</dbReference>
<dbReference type="SUPFAM" id="SSF52540">
    <property type="entry name" value="P-loop containing nucleoside triphosphate hydrolases"/>
    <property type="match status" value="1"/>
</dbReference>
<dbReference type="PROSITE" id="PS51219">
    <property type="entry name" value="DPCK"/>
    <property type="match status" value="1"/>
</dbReference>
<feature type="chain" id="PRO_0000172998" description="Dephospho-CoA kinase">
    <location>
        <begin position="1"/>
        <end position="207"/>
    </location>
</feature>
<feature type="domain" description="DPCK" evidence="1">
    <location>
        <begin position="4"/>
        <end position="203"/>
    </location>
</feature>
<feature type="binding site" evidence="1">
    <location>
        <begin position="12"/>
        <end position="17"/>
    </location>
    <ligand>
        <name>ATP</name>
        <dbReference type="ChEBI" id="CHEBI:30616"/>
    </ligand>
</feature>
<accession>P63830</accession>
<accession>Q99TH4</accession>
<proteinExistence type="inferred from homology"/>
<keyword id="KW-0067">ATP-binding</keyword>
<keyword id="KW-0173">Coenzyme A biosynthesis</keyword>
<keyword id="KW-0963">Cytoplasm</keyword>
<keyword id="KW-0418">Kinase</keyword>
<keyword id="KW-0547">Nucleotide-binding</keyword>
<keyword id="KW-0808">Transferase</keyword>
<evidence type="ECO:0000255" key="1">
    <source>
        <dbReference type="HAMAP-Rule" id="MF_00376"/>
    </source>
</evidence>
<organism>
    <name type="scientific">Staphylococcus aureus (strain Mu50 / ATCC 700699)</name>
    <dbReference type="NCBI Taxonomy" id="158878"/>
    <lineage>
        <taxon>Bacteria</taxon>
        <taxon>Bacillati</taxon>
        <taxon>Bacillota</taxon>
        <taxon>Bacilli</taxon>
        <taxon>Bacillales</taxon>
        <taxon>Staphylococcaceae</taxon>
        <taxon>Staphylococcus</taxon>
    </lineage>
</organism>
<comment type="function">
    <text evidence="1">Catalyzes the phosphorylation of the 3'-hydroxyl group of dephosphocoenzyme A to form coenzyme A.</text>
</comment>
<comment type="catalytic activity">
    <reaction evidence="1">
        <text>3'-dephospho-CoA + ATP = ADP + CoA + H(+)</text>
        <dbReference type="Rhea" id="RHEA:18245"/>
        <dbReference type="ChEBI" id="CHEBI:15378"/>
        <dbReference type="ChEBI" id="CHEBI:30616"/>
        <dbReference type="ChEBI" id="CHEBI:57287"/>
        <dbReference type="ChEBI" id="CHEBI:57328"/>
        <dbReference type="ChEBI" id="CHEBI:456216"/>
        <dbReference type="EC" id="2.7.1.24"/>
    </reaction>
</comment>
<comment type="pathway">
    <text evidence="1">Cofactor biosynthesis; coenzyme A biosynthesis; CoA from (R)-pantothenate: step 5/5.</text>
</comment>
<comment type="subcellular location">
    <subcellularLocation>
        <location evidence="1">Cytoplasm</location>
    </subcellularLocation>
</comment>
<comment type="similarity">
    <text evidence="1">Belongs to the CoaE family.</text>
</comment>
<reference key="1">
    <citation type="journal article" date="2001" name="Lancet">
        <title>Whole genome sequencing of meticillin-resistant Staphylococcus aureus.</title>
        <authorList>
            <person name="Kuroda M."/>
            <person name="Ohta T."/>
            <person name="Uchiyama I."/>
            <person name="Baba T."/>
            <person name="Yuzawa H."/>
            <person name="Kobayashi I."/>
            <person name="Cui L."/>
            <person name="Oguchi A."/>
            <person name="Aoki K."/>
            <person name="Nagai Y."/>
            <person name="Lian J.-Q."/>
            <person name="Ito T."/>
            <person name="Kanamori M."/>
            <person name="Matsumaru H."/>
            <person name="Maruyama A."/>
            <person name="Murakami H."/>
            <person name="Hosoyama A."/>
            <person name="Mizutani-Ui Y."/>
            <person name="Takahashi N.K."/>
            <person name="Sawano T."/>
            <person name="Inoue R."/>
            <person name="Kaito C."/>
            <person name="Sekimizu K."/>
            <person name="Hirakawa H."/>
            <person name="Kuhara S."/>
            <person name="Goto S."/>
            <person name="Yabuzaki J."/>
            <person name="Kanehisa M."/>
            <person name="Yamashita A."/>
            <person name="Oshima K."/>
            <person name="Furuya K."/>
            <person name="Yoshino C."/>
            <person name="Shiba T."/>
            <person name="Hattori M."/>
            <person name="Ogasawara N."/>
            <person name="Hayashi H."/>
            <person name="Hiramatsu K."/>
        </authorList>
    </citation>
    <scope>NUCLEOTIDE SEQUENCE [LARGE SCALE GENOMIC DNA]</scope>
    <source>
        <strain>Mu50 / ATCC 700699</strain>
    </source>
</reference>
<protein>
    <recommendedName>
        <fullName evidence="1">Dephospho-CoA kinase</fullName>
        <ecNumber evidence="1">2.7.1.24</ecNumber>
    </recommendedName>
    <alternativeName>
        <fullName evidence="1">Dephosphocoenzyme A kinase</fullName>
    </alternativeName>
</protein>